<gene>
    <name evidence="1" type="primary">DRE2</name>
    <name type="ordered locus">ZYRO0B15840g</name>
</gene>
<comment type="function">
    <text evidence="1">Component of the cytosolic iron-sulfur (Fe-S) protein assembly (CIA) machinery required for the maturation of extramitochondrial Fe-S proteins. Part of an electron transfer chain functioning in an early step of cytosolic Fe-S biogenesis, facilitating the de novo assembly of a [4Fe-4S] cluster on the scaffold complex CFD1-NBP35. Electrons are transferred to DRE2 from NADPH via the FAD- and FMN-containing protein TAH18. TAH18-DRE2 are also required for the assembly of the diferric tyrosyl radical cofactor of ribonucleotide reductase (RNR), probably by providing electrons for reduction during radical cofactor maturation in the catalytic small subunit RNR2.</text>
</comment>
<comment type="cofactor">
    <cofactor evidence="1">
        <name>[2Fe-2S] cluster</name>
        <dbReference type="ChEBI" id="CHEBI:190135"/>
    </cofactor>
</comment>
<comment type="cofactor">
    <cofactor evidence="1">
        <name>[4Fe-4S] cluster</name>
        <dbReference type="ChEBI" id="CHEBI:49883"/>
    </cofactor>
</comment>
<comment type="subunit">
    <text evidence="1">Monomer. Interacts with TAH18. Interacts with MIA40.</text>
</comment>
<comment type="subcellular location">
    <subcellularLocation>
        <location evidence="1">Cytoplasm</location>
    </subcellularLocation>
    <subcellularLocation>
        <location evidence="1">Mitochondrion intermembrane space</location>
    </subcellularLocation>
</comment>
<comment type="domain">
    <text evidence="1">The C-terminal domain binds 2 Fe-S clusters but is otherwise mostly in an intrinsically disordered conformation.</text>
</comment>
<comment type="domain">
    <text evidence="1">The N-terminal domain has structural similarity with S-adenosyl-L-methionine-dependent methyltransferases, but does not bind S-adenosyl-L-methionine. It is required for correct assembly of the 2 Fe-S clusters.</text>
</comment>
<comment type="domain">
    <text evidence="1">The twin Cx2C motifs are involved in the recognition by the mitochondrial MIA40-ERV1 disulfide relay system. The formation of 2 disulfide bonds in the Cx2C motifs through dithiol/disulfide exchange reactions effectively traps the protein in the mitochondrial intermembrane space.</text>
</comment>
<comment type="similarity">
    <text evidence="1">Belongs to the anamorsin family.</text>
</comment>
<evidence type="ECO:0000255" key="1">
    <source>
        <dbReference type="HAMAP-Rule" id="MF_03115"/>
    </source>
</evidence>
<evidence type="ECO:0000256" key="2">
    <source>
        <dbReference type="SAM" id="MobiDB-lite"/>
    </source>
</evidence>
<accession>C5DSC9</accession>
<dbReference type="EMBL" id="CU928174">
    <property type="protein sequence ID" value="CAR26690.1"/>
    <property type="molecule type" value="Genomic_DNA"/>
</dbReference>
<dbReference type="RefSeq" id="XP_002495623.1">
    <property type="nucleotide sequence ID" value="XM_002495578.1"/>
</dbReference>
<dbReference type="SMR" id="C5DSC9"/>
<dbReference type="FunCoup" id="C5DSC9">
    <property type="interactions" value="183"/>
</dbReference>
<dbReference type="STRING" id="559307.C5DSC9"/>
<dbReference type="GeneID" id="8202797"/>
<dbReference type="KEGG" id="zro:ZYRO0B15840g"/>
<dbReference type="HOGENOM" id="CLU_067152_0_0_1"/>
<dbReference type="InParanoid" id="C5DSC9"/>
<dbReference type="Proteomes" id="UP000008536">
    <property type="component" value="Chromosome B"/>
</dbReference>
<dbReference type="GO" id="GO:0005758">
    <property type="term" value="C:mitochondrial intermembrane space"/>
    <property type="evidence" value="ECO:0007669"/>
    <property type="project" value="UniProtKB-SubCell"/>
</dbReference>
<dbReference type="GO" id="GO:0051537">
    <property type="term" value="F:2 iron, 2 sulfur cluster binding"/>
    <property type="evidence" value="ECO:0007669"/>
    <property type="project" value="UniProtKB-UniRule"/>
</dbReference>
<dbReference type="GO" id="GO:0051539">
    <property type="term" value="F:4 iron, 4 sulfur cluster binding"/>
    <property type="evidence" value="ECO:0007669"/>
    <property type="project" value="UniProtKB-KW"/>
</dbReference>
<dbReference type="GO" id="GO:0009055">
    <property type="term" value="F:electron transfer activity"/>
    <property type="evidence" value="ECO:0007669"/>
    <property type="project" value="UniProtKB-UniRule"/>
</dbReference>
<dbReference type="GO" id="GO:0046872">
    <property type="term" value="F:metal ion binding"/>
    <property type="evidence" value="ECO:0007669"/>
    <property type="project" value="UniProtKB-KW"/>
</dbReference>
<dbReference type="GO" id="GO:0016226">
    <property type="term" value="P:iron-sulfur cluster assembly"/>
    <property type="evidence" value="ECO:0007669"/>
    <property type="project" value="UniProtKB-UniRule"/>
</dbReference>
<dbReference type="Gene3D" id="3.40.50.11000">
    <property type="entry name" value="Fe-S cluster assembly protein Dre2, N-terminal domain"/>
    <property type="match status" value="1"/>
</dbReference>
<dbReference type="HAMAP" id="MF_03115">
    <property type="entry name" value="Anamorsin"/>
    <property type="match status" value="1"/>
</dbReference>
<dbReference type="InterPro" id="IPR007785">
    <property type="entry name" value="Anamorsin"/>
</dbReference>
<dbReference type="InterPro" id="IPR046408">
    <property type="entry name" value="CIAPIN1"/>
</dbReference>
<dbReference type="InterPro" id="IPR031838">
    <property type="entry name" value="Dre2_N"/>
</dbReference>
<dbReference type="PANTHER" id="PTHR13273">
    <property type="entry name" value="ANAMORSIN"/>
    <property type="match status" value="1"/>
</dbReference>
<dbReference type="PANTHER" id="PTHR13273:SF14">
    <property type="entry name" value="ANAMORSIN"/>
    <property type="match status" value="1"/>
</dbReference>
<dbReference type="Pfam" id="PF05093">
    <property type="entry name" value="CIAPIN1"/>
    <property type="match status" value="1"/>
</dbReference>
<dbReference type="Pfam" id="PF16803">
    <property type="entry name" value="DRE2_N"/>
    <property type="match status" value="1"/>
</dbReference>
<proteinExistence type="inferred from homology"/>
<keyword id="KW-0001">2Fe-2S</keyword>
<keyword id="KW-0004">4Fe-4S</keyword>
<keyword id="KW-0963">Cytoplasm</keyword>
<keyword id="KW-0408">Iron</keyword>
<keyword id="KW-0411">Iron-sulfur</keyword>
<keyword id="KW-0479">Metal-binding</keyword>
<keyword id="KW-0496">Mitochondrion</keyword>
<keyword id="KW-1185">Reference proteome</keyword>
<sequence>MASTKTGLVLIHPGATEDPSSVVNAQEQARSEGVSVEAQFLINKINDGSVKLEDNHYDEVRYVTPEASDEIRFPSKLIGVIGKSLKTNGKLYGLSDLYKLDALINEFEISRSENHYCWIKKASIKAEPVAVPLRNHKKTTTPGTTTTAKKSLPIFKRATDNDSTKNKQQKQQHTGPARVSLDSEDEDEESEGSSDPSDSKSKFFEKSGSPLTENDSIEEDELVDENEMREPSLTMITCGKSKTRRRKACKDCTCGQKEIEEEELDGVRKQQDKVVKFSDQELTEIDFTVQGKKVGGCGSCTLGDAFRCSGCPYLGLPAFKPGQQIDLSSMGDDL</sequence>
<reference key="1">
    <citation type="journal article" date="2009" name="Genome Res.">
        <title>Comparative genomics of protoploid Saccharomycetaceae.</title>
        <authorList>
            <consortium name="The Genolevures Consortium"/>
            <person name="Souciet J.-L."/>
            <person name="Dujon B."/>
            <person name="Gaillardin C."/>
            <person name="Johnston M."/>
            <person name="Baret P.V."/>
            <person name="Cliften P."/>
            <person name="Sherman D.J."/>
            <person name="Weissenbach J."/>
            <person name="Westhof E."/>
            <person name="Wincker P."/>
            <person name="Jubin C."/>
            <person name="Poulain J."/>
            <person name="Barbe V."/>
            <person name="Segurens B."/>
            <person name="Artiguenave F."/>
            <person name="Anthouard V."/>
            <person name="Vacherie B."/>
            <person name="Val M.-E."/>
            <person name="Fulton R.S."/>
            <person name="Minx P."/>
            <person name="Wilson R."/>
            <person name="Durrens P."/>
            <person name="Jean G."/>
            <person name="Marck C."/>
            <person name="Martin T."/>
            <person name="Nikolski M."/>
            <person name="Rolland T."/>
            <person name="Seret M.-L."/>
            <person name="Casaregola S."/>
            <person name="Despons L."/>
            <person name="Fairhead C."/>
            <person name="Fischer G."/>
            <person name="Lafontaine I."/>
            <person name="Leh V."/>
            <person name="Lemaire M."/>
            <person name="de Montigny J."/>
            <person name="Neuveglise C."/>
            <person name="Thierry A."/>
            <person name="Blanc-Lenfle I."/>
            <person name="Bleykasten C."/>
            <person name="Diffels J."/>
            <person name="Fritsch E."/>
            <person name="Frangeul L."/>
            <person name="Goeffon A."/>
            <person name="Jauniaux N."/>
            <person name="Kachouri-Lafond R."/>
            <person name="Payen C."/>
            <person name="Potier S."/>
            <person name="Pribylova L."/>
            <person name="Ozanne C."/>
            <person name="Richard G.-F."/>
            <person name="Sacerdot C."/>
            <person name="Straub M.-L."/>
            <person name="Talla E."/>
        </authorList>
    </citation>
    <scope>NUCLEOTIDE SEQUENCE [LARGE SCALE GENOMIC DNA]</scope>
    <source>
        <strain>ATCC 2623 / CBS 732 / BCRC 21506 / NBRC 1130 / NCYC 568 / NRRL Y-229</strain>
    </source>
</reference>
<name>DRE2_ZYGRC</name>
<organism>
    <name type="scientific">Zygosaccharomyces rouxii (strain ATCC 2623 / CBS 732 / NBRC 1130 / NCYC 568 / NRRL Y-229)</name>
    <dbReference type="NCBI Taxonomy" id="559307"/>
    <lineage>
        <taxon>Eukaryota</taxon>
        <taxon>Fungi</taxon>
        <taxon>Dikarya</taxon>
        <taxon>Ascomycota</taxon>
        <taxon>Saccharomycotina</taxon>
        <taxon>Saccharomycetes</taxon>
        <taxon>Saccharomycetales</taxon>
        <taxon>Saccharomycetaceae</taxon>
        <taxon>Zygosaccharomyces</taxon>
    </lineage>
</organism>
<feature type="chain" id="PRO_0000392411" description="Fe-S cluster assembly protein DRE2">
    <location>
        <begin position="1"/>
        <end position="334"/>
    </location>
</feature>
<feature type="region of interest" description="N-terminal SAM-like domain" evidence="1">
    <location>
        <begin position="1"/>
        <end position="131"/>
    </location>
</feature>
<feature type="region of interest" description="Linker" evidence="1">
    <location>
        <begin position="132"/>
        <end position="228"/>
    </location>
</feature>
<feature type="region of interest" description="Disordered" evidence="2">
    <location>
        <begin position="135"/>
        <end position="229"/>
    </location>
</feature>
<feature type="region of interest" description="Fe-S binding site A" evidence="1">
    <location>
        <begin position="238"/>
        <end position="254"/>
    </location>
</feature>
<feature type="region of interest" description="Fe-S binding site B" evidence="1">
    <location>
        <begin position="297"/>
        <end position="311"/>
    </location>
</feature>
<feature type="short sequence motif" description="Cx2C motif 1" evidence="1">
    <location>
        <begin position="297"/>
        <end position="300"/>
    </location>
</feature>
<feature type="short sequence motif" description="Cx2C motif 2" evidence="1">
    <location>
        <begin position="308"/>
        <end position="311"/>
    </location>
</feature>
<feature type="compositionally biased region" description="Low complexity" evidence="2">
    <location>
        <begin position="140"/>
        <end position="150"/>
    </location>
</feature>
<feature type="compositionally biased region" description="Acidic residues" evidence="2">
    <location>
        <begin position="182"/>
        <end position="192"/>
    </location>
</feature>
<feature type="compositionally biased region" description="Acidic residues" evidence="2">
    <location>
        <begin position="215"/>
        <end position="227"/>
    </location>
</feature>
<feature type="binding site" evidence="1">
    <location>
        <position position="238"/>
    </location>
    <ligand>
        <name>[2Fe-2S] cluster</name>
        <dbReference type="ChEBI" id="CHEBI:190135"/>
    </ligand>
</feature>
<feature type="binding site" evidence="1">
    <location>
        <position position="249"/>
    </location>
    <ligand>
        <name>[2Fe-2S] cluster</name>
        <dbReference type="ChEBI" id="CHEBI:190135"/>
    </ligand>
</feature>
<feature type="binding site" evidence="1">
    <location>
        <position position="252"/>
    </location>
    <ligand>
        <name>[2Fe-2S] cluster</name>
        <dbReference type="ChEBI" id="CHEBI:190135"/>
    </ligand>
</feature>
<feature type="binding site" evidence="1">
    <location>
        <position position="254"/>
    </location>
    <ligand>
        <name>[2Fe-2S] cluster</name>
        <dbReference type="ChEBI" id="CHEBI:190135"/>
    </ligand>
</feature>
<feature type="binding site" evidence="1">
    <location>
        <position position="297"/>
    </location>
    <ligand>
        <name>[4Fe-4S] cluster</name>
        <dbReference type="ChEBI" id="CHEBI:49883"/>
    </ligand>
</feature>
<feature type="binding site" evidence="1">
    <location>
        <position position="300"/>
    </location>
    <ligand>
        <name>[4Fe-4S] cluster</name>
        <dbReference type="ChEBI" id="CHEBI:49883"/>
    </ligand>
</feature>
<feature type="binding site" evidence="1">
    <location>
        <position position="308"/>
    </location>
    <ligand>
        <name>[4Fe-4S] cluster</name>
        <dbReference type="ChEBI" id="CHEBI:49883"/>
    </ligand>
</feature>
<feature type="binding site" evidence="1">
    <location>
        <position position="311"/>
    </location>
    <ligand>
        <name>[4Fe-4S] cluster</name>
        <dbReference type="ChEBI" id="CHEBI:49883"/>
    </ligand>
</feature>
<protein>
    <recommendedName>
        <fullName evidence="1">Fe-S cluster assembly protein DRE2</fullName>
    </recommendedName>
    <alternativeName>
        <fullName evidence="1">Anamorsin homolog</fullName>
    </alternativeName>
</protein>